<dbReference type="EC" id="2.4.1.21" evidence="1"/>
<dbReference type="EMBL" id="CP000921">
    <property type="protein sequence ID" value="ACO23617.1"/>
    <property type="molecule type" value="Genomic_DNA"/>
</dbReference>
<dbReference type="RefSeq" id="WP_000697313.1">
    <property type="nucleotide sequence ID" value="NC_012469.1"/>
</dbReference>
<dbReference type="SMR" id="C1CRM3"/>
<dbReference type="CAZy" id="GT5">
    <property type="family name" value="Glycosyltransferase Family 5"/>
</dbReference>
<dbReference type="GeneID" id="45653538"/>
<dbReference type="KEGG" id="snt:SPT_1169"/>
<dbReference type="HOGENOM" id="CLU_009583_18_2_9"/>
<dbReference type="UniPathway" id="UPA00164"/>
<dbReference type="GO" id="GO:0009011">
    <property type="term" value="F:alpha-1,4-glucan glucosyltransferase (ADP-glucose donor) activity"/>
    <property type="evidence" value="ECO:0007669"/>
    <property type="project" value="UniProtKB-UniRule"/>
</dbReference>
<dbReference type="GO" id="GO:0004373">
    <property type="term" value="F:alpha-1,4-glucan glucosyltransferase (UDP-glucose donor) activity"/>
    <property type="evidence" value="ECO:0007669"/>
    <property type="project" value="InterPro"/>
</dbReference>
<dbReference type="GO" id="GO:0005978">
    <property type="term" value="P:glycogen biosynthetic process"/>
    <property type="evidence" value="ECO:0007669"/>
    <property type="project" value="UniProtKB-UniRule"/>
</dbReference>
<dbReference type="CDD" id="cd03791">
    <property type="entry name" value="GT5_Glycogen_synthase_DULL1-like"/>
    <property type="match status" value="1"/>
</dbReference>
<dbReference type="Gene3D" id="3.40.50.2000">
    <property type="entry name" value="Glycogen Phosphorylase B"/>
    <property type="match status" value="2"/>
</dbReference>
<dbReference type="HAMAP" id="MF_00484">
    <property type="entry name" value="Glycogen_synth"/>
    <property type="match status" value="1"/>
</dbReference>
<dbReference type="InterPro" id="IPR001296">
    <property type="entry name" value="Glyco_trans_1"/>
</dbReference>
<dbReference type="InterPro" id="IPR011835">
    <property type="entry name" value="GS/SS"/>
</dbReference>
<dbReference type="InterPro" id="IPR013534">
    <property type="entry name" value="Starch_synth_cat_dom"/>
</dbReference>
<dbReference type="NCBIfam" id="TIGR02095">
    <property type="entry name" value="glgA"/>
    <property type="match status" value="1"/>
</dbReference>
<dbReference type="NCBIfam" id="NF001898">
    <property type="entry name" value="PRK00654.1-1"/>
    <property type="match status" value="1"/>
</dbReference>
<dbReference type="PANTHER" id="PTHR45825:SF11">
    <property type="entry name" value="ALPHA AMYLASE DOMAIN-CONTAINING PROTEIN"/>
    <property type="match status" value="1"/>
</dbReference>
<dbReference type="PANTHER" id="PTHR45825">
    <property type="entry name" value="GRANULE-BOUND STARCH SYNTHASE 1, CHLOROPLASTIC/AMYLOPLASTIC"/>
    <property type="match status" value="1"/>
</dbReference>
<dbReference type="Pfam" id="PF08323">
    <property type="entry name" value="Glyco_transf_5"/>
    <property type="match status" value="1"/>
</dbReference>
<dbReference type="Pfam" id="PF00534">
    <property type="entry name" value="Glycos_transf_1"/>
    <property type="match status" value="1"/>
</dbReference>
<dbReference type="SUPFAM" id="SSF53756">
    <property type="entry name" value="UDP-Glycosyltransferase/glycogen phosphorylase"/>
    <property type="match status" value="1"/>
</dbReference>
<comment type="function">
    <text evidence="1">Synthesizes alpha-1,4-glucan chains using ADP-glucose.</text>
</comment>
<comment type="catalytic activity">
    <reaction evidence="1">
        <text>[(1-&gt;4)-alpha-D-glucosyl](n) + ADP-alpha-D-glucose = [(1-&gt;4)-alpha-D-glucosyl](n+1) + ADP + H(+)</text>
        <dbReference type="Rhea" id="RHEA:18189"/>
        <dbReference type="Rhea" id="RHEA-COMP:9584"/>
        <dbReference type="Rhea" id="RHEA-COMP:9587"/>
        <dbReference type="ChEBI" id="CHEBI:15378"/>
        <dbReference type="ChEBI" id="CHEBI:15444"/>
        <dbReference type="ChEBI" id="CHEBI:57498"/>
        <dbReference type="ChEBI" id="CHEBI:456216"/>
        <dbReference type="EC" id="2.4.1.21"/>
    </reaction>
</comment>
<comment type="pathway">
    <text evidence="1">Glycan biosynthesis; glycogen biosynthesis.</text>
</comment>
<comment type="similarity">
    <text evidence="1">Belongs to the glycosyltransferase 1 family. Bacterial/plant glycogen synthase subfamily.</text>
</comment>
<sequence length="477" mass="54132">MKILFVAAEGAPFSKTGGLGDVIGALPKSLVKAGHEVAVILPYYDMVEAKFGSQIEDVLHFEVSVGWRRQYCGIKKTVLNGVTFYFIDNQYYFFRGHVYGDFDDGERFAFFQLAAIEAMERIDFIPDLLHVHDYHTAMIPFLLKEKYRWIQAYEDIETVLTIHNLEFQGQFSEGMLGDLFGVGFERYADGTLRWNNCLNWMKAGILYANRVSTVSPSYAHEIMTSQFGCNLDQILKMESGKVSGIVNGIDADLYNPQTDALLDYHFNQEDLSGKAKNKAKLQERVGLPVRADVPLVGIVSRLTRQKGFDVVVESLHHILQEDVQIVLLGTGDPAFEGAFSWFAQIYPDKLSTNITFDVKLAQEIYAACDLFLMPSRFEPCGLSQMMAMRYGTLPLVHEVGGLRDTVRAFNPIEGSGTGFSFDNLSPYWLNWTFQTALDLYRNHPDIWRNLQKQAMESDFSWDTACKSYLDLYHSLVN</sequence>
<evidence type="ECO:0000255" key="1">
    <source>
        <dbReference type="HAMAP-Rule" id="MF_00484"/>
    </source>
</evidence>
<organism>
    <name type="scientific">Streptococcus pneumoniae (strain Taiwan19F-14)</name>
    <dbReference type="NCBI Taxonomy" id="487213"/>
    <lineage>
        <taxon>Bacteria</taxon>
        <taxon>Bacillati</taxon>
        <taxon>Bacillota</taxon>
        <taxon>Bacilli</taxon>
        <taxon>Lactobacillales</taxon>
        <taxon>Streptococcaceae</taxon>
        <taxon>Streptococcus</taxon>
    </lineage>
</organism>
<protein>
    <recommendedName>
        <fullName evidence="1">Glycogen synthase</fullName>
        <ecNumber evidence="1">2.4.1.21</ecNumber>
    </recommendedName>
    <alternativeName>
        <fullName evidence="1">Starch [bacterial glycogen] synthase</fullName>
    </alternativeName>
</protein>
<name>GLGA_STRZT</name>
<proteinExistence type="inferred from homology"/>
<keyword id="KW-0320">Glycogen biosynthesis</keyword>
<keyword id="KW-0328">Glycosyltransferase</keyword>
<keyword id="KW-0808">Transferase</keyword>
<feature type="chain" id="PRO_1000190088" description="Glycogen synthase">
    <location>
        <begin position="1"/>
        <end position="477"/>
    </location>
</feature>
<feature type="binding site" evidence="1">
    <location>
        <position position="15"/>
    </location>
    <ligand>
        <name>ADP-alpha-D-glucose</name>
        <dbReference type="ChEBI" id="CHEBI:57498"/>
    </ligand>
</feature>
<accession>C1CRM3</accession>
<gene>
    <name evidence="1" type="primary">glgA</name>
    <name type="ordered locus">SPT_1169</name>
</gene>
<reference key="1">
    <citation type="journal article" date="2010" name="Genome Biol.">
        <title>Structure and dynamics of the pan-genome of Streptococcus pneumoniae and closely related species.</title>
        <authorList>
            <person name="Donati C."/>
            <person name="Hiller N.L."/>
            <person name="Tettelin H."/>
            <person name="Muzzi A."/>
            <person name="Croucher N.J."/>
            <person name="Angiuoli S.V."/>
            <person name="Oggioni M."/>
            <person name="Dunning Hotopp J.C."/>
            <person name="Hu F.Z."/>
            <person name="Riley D.R."/>
            <person name="Covacci A."/>
            <person name="Mitchell T.J."/>
            <person name="Bentley S.D."/>
            <person name="Kilian M."/>
            <person name="Ehrlich G.D."/>
            <person name="Rappuoli R."/>
            <person name="Moxon E.R."/>
            <person name="Masignani V."/>
        </authorList>
    </citation>
    <scope>NUCLEOTIDE SEQUENCE [LARGE SCALE GENOMIC DNA]</scope>
    <source>
        <strain>Taiwan19F-14</strain>
    </source>
</reference>